<name>KPYC_ARATH</name>
<proteinExistence type="inferred from homology"/>
<feature type="chain" id="PRO_0000112123" description="Probable pyruvate kinase, cytosolic isozyme">
    <location>
        <begin position="1"/>
        <end position="497"/>
    </location>
</feature>
<feature type="binding site" evidence="3">
    <location>
        <position position="37"/>
    </location>
    <ligand>
        <name>substrate</name>
    </ligand>
</feature>
<feature type="binding site" evidence="2">
    <location>
        <begin position="39"/>
        <end position="42"/>
    </location>
    <ligand>
        <name>ATP</name>
        <dbReference type="ChEBI" id="CHEBI:30616"/>
    </ligand>
</feature>
<feature type="binding site" evidence="3">
    <location>
        <position position="39"/>
    </location>
    <ligand>
        <name>K(+)</name>
        <dbReference type="ChEBI" id="CHEBI:29103"/>
    </ligand>
</feature>
<feature type="binding site" evidence="3">
    <location>
        <position position="41"/>
    </location>
    <ligand>
        <name>K(+)</name>
        <dbReference type="ChEBI" id="CHEBI:29103"/>
    </ligand>
</feature>
<feature type="binding site" evidence="3">
    <location>
        <position position="71"/>
    </location>
    <ligand>
        <name>K(+)</name>
        <dbReference type="ChEBI" id="CHEBI:29103"/>
    </ligand>
</feature>
<feature type="binding site" evidence="3">
    <location>
        <position position="72"/>
    </location>
    <ligand>
        <name>K(+)</name>
        <dbReference type="ChEBI" id="CHEBI:29103"/>
    </ligand>
</feature>
<feature type="binding site" evidence="2">
    <location>
        <position position="78"/>
    </location>
    <ligand>
        <name>ATP</name>
        <dbReference type="ChEBI" id="CHEBI:30616"/>
    </ligand>
</feature>
<feature type="binding site" evidence="2">
    <location>
        <position position="163"/>
    </location>
    <ligand>
        <name>ATP</name>
        <dbReference type="ChEBI" id="CHEBI:30616"/>
    </ligand>
</feature>
<feature type="binding site" evidence="3">
    <location>
        <position position="227"/>
    </location>
    <ligand>
        <name>substrate</name>
    </ligand>
</feature>
<feature type="binding site" evidence="2">
    <location>
        <position position="229"/>
    </location>
    <ligand>
        <name>Mg(2+)</name>
        <dbReference type="ChEBI" id="CHEBI:18420"/>
    </ligand>
</feature>
<feature type="binding site" evidence="3">
    <location>
        <position position="252"/>
    </location>
    <ligand>
        <name>substrate</name>
    </ligand>
</feature>
<feature type="binding site" evidence="2">
    <location>
        <position position="253"/>
    </location>
    <ligand>
        <name>Mg(2+)</name>
        <dbReference type="ChEBI" id="CHEBI:18420"/>
    </ligand>
</feature>
<feature type="binding site" evidence="3">
    <location>
        <position position="253"/>
    </location>
    <ligand>
        <name>substrate</name>
    </ligand>
</feature>
<feature type="binding site" evidence="3">
    <location>
        <position position="285"/>
    </location>
    <ligand>
        <name>substrate</name>
    </ligand>
</feature>
<feature type="site" description="Transition state stabilizer" evidence="1">
    <location>
        <position position="227"/>
    </location>
</feature>
<reference key="1">
    <citation type="journal article" date="1999" name="Nature">
        <title>Sequence and analysis of chromosome 4 of the plant Arabidopsis thaliana.</title>
        <authorList>
            <person name="Mayer K.F.X."/>
            <person name="Schueller C."/>
            <person name="Wambutt R."/>
            <person name="Murphy G."/>
            <person name="Volckaert G."/>
            <person name="Pohl T."/>
            <person name="Duesterhoeft A."/>
            <person name="Stiekema W."/>
            <person name="Entian K.-D."/>
            <person name="Terryn N."/>
            <person name="Harris B."/>
            <person name="Ansorge W."/>
            <person name="Brandt P."/>
            <person name="Grivell L.A."/>
            <person name="Rieger M."/>
            <person name="Weichselgartner M."/>
            <person name="de Simone V."/>
            <person name="Obermaier B."/>
            <person name="Mache R."/>
            <person name="Mueller M."/>
            <person name="Kreis M."/>
            <person name="Delseny M."/>
            <person name="Puigdomenech P."/>
            <person name="Watson M."/>
            <person name="Schmidtheini T."/>
            <person name="Reichert B."/>
            <person name="Portetelle D."/>
            <person name="Perez-Alonso M."/>
            <person name="Boutry M."/>
            <person name="Bancroft I."/>
            <person name="Vos P."/>
            <person name="Hoheisel J."/>
            <person name="Zimmermann W."/>
            <person name="Wedler H."/>
            <person name="Ridley P."/>
            <person name="Langham S.-A."/>
            <person name="McCullagh B."/>
            <person name="Bilham L."/>
            <person name="Robben J."/>
            <person name="van der Schueren J."/>
            <person name="Grymonprez B."/>
            <person name="Chuang Y.-J."/>
            <person name="Vandenbussche F."/>
            <person name="Braeken M."/>
            <person name="Weltjens I."/>
            <person name="Voet M."/>
            <person name="Bastiaens I."/>
            <person name="Aert R."/>
            <person name="Defoor E."/>
            <person name="Weitzenegger T."/>
            <person name="Bothe G."/>
            <person name="Ramsperger U."/>
            <person name="Hilbert H."/>
            <person name="Braun M."/>
            <person name="Holzer E."/>
            <person name="Brandt A."/>
            <person name="Peters S."/>
            <person name="van Staveren M."/>
            <person name="Dirkse W."/>
            <person name="Mooijman P."/>
            <person name="Klein Lankhorst R."/>
            <person name="Rose M."/>
            <person name="Hauf J."/>
            <person name="Koetter P."/>
            <person name="Berneiser S."/>
            <person name="Hempel S."/>
            <person name="Feldpausch M."/>
            <person name="Lamberth S."/>
            <person name="Van den Daele H."/>
            <person name="De Keyser A."/>
            <person name="Buysshaert C."/>
            <person name="Gielen J."/>
            <person name="Villarroel R."/>
            <person name="De Clercq R."/>
            <person name="van Montagu M."/>
            <person name="Rogers J."/>
            <person name="Cronin A."/>
            <person name="Quail M.A."/>
            <person name="Bray-Allen S."/>
            <person name="Clark L."/>
            <person name="Doggett J."/>
            <person name="Hall S."/>
            <person name="Kay M."/>
            <person name="Lennard N."/>
            <person name="McLay K."/>
            <person name="Mayes R."/>
            <person name="Pettett A."/>
            <person name="Rajandream M.A."/>
            <person name="Lyne M."/>
            <person name="Benes V."/>
            <person name="Rechmann S."/>
            <person name="Borkova D."/>
            <person name="Bloecker H."/>
            <person name="Scharfe M."/>
            <person name="Grimm M."/>
            <person name="Loehnert T.-H."/>
            <person name="Dose S."/>
            <person name="de Haan M."/>
            <person name="Maarse A.C."/>
            <person name="Schaefer M."/>
            <person name="Mueller-Auer S."/>
            <person name="Gabel C."/>
            <person name="Fuchs M."/>
            <person name="Fartmann B."/>
            <person name="Granderath K."/>
            <person name="Dauner D."/>
            <person name="Herzl A."/>
            <person name="Neumann S."/>
            <person name="Argiriou A."/>
            <person name="Vitale D."/>
            <person name="Liguori R."/>
            <person name="Piravandi E."/>
            <person name="Massenet O."/>
            <person name="Quigley F."/>
            <person name="Clabauld G."/>
            <person name="Muendlein A."/>
            <person name="Felber R."/>
            <person name="Schnabl S."/>
            <person name="Hiller R."/>
            <person name="Schmidt W."/>
            <person name="Lecharny A."/>
            <person name="Aubourg S."/>
            <person name="Chefdor F."/>
            <person name="Cooke R."/>
            <person name="Berger C."/>
            <person name="Monfort A."/>
            <person name="Casacuberta E."/>
            <person name="Gibbons T."/>
            <person name="Weber N."/>
            <person name="Vandenbol M."/>
            <person name="Bargues M."/>
            <person name="Terol J."/>
            <person name="Torres A."/>
            <person name="Perez-Perez A."/>
            <person name="Purnelle B."/>
            <person name="Bent E."/>
            <person name="Johnson S."/>
            <person name="Tacon D."/>
            <person name="Jesse T."/>
            <person name="Heijnen L."/>
            <person name="Schwarz S."/>
            <person name="Scholler P."/>
            <person name="Heber S."/>
            <person name="Francs P."/>
            <person name="Bielke C."/>
            <person name="Frishman D."/>
            <person name="Haase D."/>
            <person name="Lemcke K."/>
            <person name="Mewes H.-W."/>
            <person name="Stocker S."/>
            <person name="Zaccaria P."/>
            <person name="Bevan M."/>
            <person name="Wilson R.K."/>
            <person name="de la Bastide M."/>
            <person name="Habermann K."/>
            <person name="Parnell L."/>
            <person name="Dedhia N."/>
            <person name="Gnoj L."/>
            <person name="Schutz K."/>
            <person name="Huang E."/>
            <person name="Spiegel L."/>
            <person name="Sekhon M."/>
            <person name="Murray J."/>
            <person name="Sheet P."/>
            <person name="Cordes M."/>
            <person name="Abu-Threideh J."/>
            <person name="Stoneking T."/>
            <person name="Kalicki J."/>
            <person name="Graves T."/>
            <person name="Harmon G."/>
            <person name="Edwards J."/>
            <person name="Latreille P."/>
            <person name="Courtney L."/>
            <person name="Cloud J."/>
            <person name="Abbott A."/>
            <person name="Scott K."/>
            <person name="Johnson D."/>
            <person name="Minx P."/>
            <person name="Bentley D."/>
            <person name="Fulton B."/>
            <person name="Miller N."/>
            <person name="Greco T."/>
            <person name="Kemp K."/>
            <person name="Kramer J."/>
            <person name="Fulton L."/>
            <person name="Mardis E."/>
            <person name="Dante M."/>
            <person name="Pepin K."/>
            <person name="Hillier L.W."/>
            <person name="Nelson J."/>
            <person name="Spieth J."/>
            <person name="Ryan E."/>
            <person name="Andrews S."/>
            <person name="Geisel C."/>
            <person name="Layman D."/>
            <person name="Du H."/>
            <person name="Ali J."/>
            <person name="Berghoff A."/>
            <person name="Jones K."/>
            <person name="Drone K."/>
            <person name="Cotton M."/>
            <person name="Joshu C."/>
            <person name="Antonoiu B."/>
            <person name="Zidanic M."/>
            <person name="Strong C."/>
            <person name="Sun H."/>
            <person name="Lamar B."/>
            <person name="Yordan C."/>
            <person name="Ma P."/>
            <person name="Zhong J."/>
            <person name="Preston R."/>
            <person name="Vil D."/>
            <person name="Shekher M."/>
            <person name="Matero A."/>
            <person name="Shah R."/>
            <person name="Swaby I.K."/>
            <person name="O'Shaughnessy A."/>
            <person name="Rodriguez M."/>
            <person name="Hoffman J."/>
            <person name="Till S."/>
            <person name="Granat S."/>
            <person name="Shohdy N."/>
            <person name="Hasegawa A."/>
            <person name="Hameed A."/>
            <person name="Lodhi M."/>
            <person name="Johnson A."/>
            <person name="Chen E."/>
            <person name="Marra M.A."/>
            <person name="Martienssen R."/>
            <person name="McCombie W.R."/>
        </authorList>
    </citation>
    <scope>NUCLEOTIDE SEQUENCE [LARGE SCALE GENOMIC DNA]</scope>
    <source>
        <strain>cv. Columbia</strain>
    </source>
</reference>
<reference key="2">
    <citation type="journal article" date="2017" name="Plant J.">
        <title>Araport11: a complete reannotation of the Arabidopsis thaliana reference genome.</title>
        <authorList>
            <person name="Cheng C.Y."/>
            <person name="Krishnakumar V."/>
            <person name="Chan A.P."/>
            <person name="Thibaud-Nissen F."/>
            <person name="Schobel S."/>
            <person name="Town C.D."/>
        </authorList>
    </citation>
    <scope>GENOME REANNOTATION</scope>
    <source>
        <strain>cv. Columbia</strain>
    </source>
</reference>
<accession>O65595</accession>
<keyword id="KW-0067">ATP-binding</keyword>
<keyword id="KW-0963">Cytoplasm</keyword>
<keyword id="KW-0324">Glycolysis</keyword>
<keyword id="KW-0418">Kinase</keyword>
<keyword id="KW-0460">Magnesium</keyword>
<keyword id="KW-0479">Metal-binding</keyword>
<keyword id="KW-0547">Nucleotide-binding</keyword>
<keyword id="KW-0630">Potassium</keyword>
<keyword id="KW-0670">Pyruvate</keyword>
<keyword id="KW-1185">Reference proteome</keyword>
<keyword id="KW-0808">Transferase</keyword>
<gene>
    <name type="ordered locus">At4g26390</name>
    <name type="ORF">M3E9.180</name>
</gene>
<organism>
    <name type="scientific">Arabidopsis thaliana</name>
    <name type="common">Mouse-ear cress</name>
    <dbReference type="NCBI Taxonomy" id="3702"/>
    <lineage>
        <taxon>Eukaryota</taxon>
        <taxon>Viridiplantae</taxon>
        <taxon>Streptophyta</taxon>
        <taxon>Embryophyta</taxon>
        <taxon>Tracheophyta</taxon>
        <taxon>Spermatophyta</taxon>
        <taxon>Magnoliopsida</taxon>
        <taxon>eudicotyledons</taxon>
        <taxon>Gunneridae</taxon>
        <taxon>Pentapetalae</taxon>
        <taxon>rosids</taxon>
        <taxon>malvids</taxon>
        <taxon>Brassicales</taxon>
        <taxon>Brassicaceae</taxon>
        <taxon>Camelineae</taxon>
        <taxon>Arabidopsis</taxon>
    </lineage>
</organism>
<sequence length="497" mass="54319">MAMEQRPKTKIVCTLGPASRSVPMVEKLLMAGMSVARFNFSHGSYEYHQETLDNLRQAMLNTGMLCAVMLDTKGPEIRTGFLKDGKPIQLKQGQEITISTDYDLKGDEKTICMSYKKLAQDVNPGMVILCADGTISLKVLSCDKEKGTVRCRCENTSMLGERKNVNLPGVVVDLPTLTEKDKQDILEWGVPNQIDMIALSFVRKGSDLVQVRKLLGKHAKTILLMSKVENQEGVANFDDILINSDAFMIARGDLGMEIPIEKIFLAQKVMIYKCNFMGKPVVTATQMLESMIKSPRPTRAEATDVANAVLDGTDCVMLSGETAAGAYPELAVRTMAKICVEAESTLDYGDIFKRIMLHAAVPMSPMESLASSAVRTATSSRATLMMVLTRGGSTARLVAKYRPGIPILSVVVPEITSDSFDWACSNEAPARHSLIYRGLVPVLYAGSARASIDESTEETLEFASEYGKKKQLCKTGDSVVALFRTGNAIVIKILTVK</sequence>
<dbReference type="EC" id="2.7.1.40"/>
<dbReference type="EMBL" id="AL022223">
    <property type="protein sequence ID" value="CAA18231.1"/>
    <property type="molecule type" value="Genomic_DNA"/>
</dbReference>
<dbReference type="EMBL" id="AL161565">
    <property type="protein sequence ID" value="CAB79494.1"/>
    <property type="molecule type" value="Genomic_DNA"/>
</dbReference>
<dbReference type="EMBL" id="CP002687">
    <property type="protein sequence ID" value="AEE85192.1"/>
    <property type="molecule type" value="Genomic_DNA"/>
</dbReference>
<dbReference type="PIR" id="T05065">
    <property type="entry name" value="T05065"/>
</dbReference>
<dbReference type="RefSeq" id="NP_194369.1">
    <property type="nucleotide sequence ID" value="NM_118772.2"/>
</dbReference>
<dbReference type="SMR" id="O65595"/>
<dbReference type="BioGRID" id="14032">
    <property type="interactions" value="2"/>
</dbReference>
<dbReference type="FunCoup" id="O65595">
    <property type="interactions" value="1642"/>
</dbReference>
<dbReference type="STRING" id="3702.O65595"/>
<dbReference type="PaxDb" id="3702-AT4G26390.1"/>
<dbReference type="ProteomicsDB" id="238224"/>
<dbReference type="EnsemblPlants" id="AT4G26390.1">
    <property type="protein sequence ID" value="AT4G26390.1"/>
    <property type="gene ID" value="AT4G26390"/>
</dbReference>
<dbReference type="GeneID" id="828745"/>
<dbReference type="Gramene" id="AT4G26390.1">
    <property type="protein sequence ID" value="AT4G26390.1"/>
    <property type="gene ID" value="AT4G26390"/>
</dbReference>
<dbReference type="KEGG" id="ath:AT4G26390"/>
<dbReference type="Araport" id="AT4G26390"/>
<dbReference type="TAIR" id="AT4G26390"/>
<dbReference type="eggNOG" id="KOG2323">
    <property type="taxonomic scope" value="Eukaryota"/>
</dbReference>
<dbReference type="HOGENOM" id="CLU_015439_0_1_1"/>
<dbReference type="InParanoid" id="O65595"/>
<dbReference type="OMA" id="GIICTIX"/>
<dbReference type="OrthoDB" id="108365at2759"/>
<dbReference type="PhylomeDB" id="O65595"/>
<dbReference type="BioCyc" id="ARA:AT4G26390-MONOMER"/>
<dbReference type="UniPathway" id="UPA00109">
    <property type="reaction ID" value="UER00188"/>
</dbReference>
<dbReference type="PRO" id="PR:O65595"/>
<dbReference type="Proteomes" id="UP000006548">
    <property type="component" value="Chromosome 4"/>
</dbReference>
<dbReference type="ExpressionAtlas" id="O65595">
    <property type="expression patterns" value="baseline and differential"/>
</dbReference>
<dbReference type="GO" id="GO:0005829">
    <property type="term" value="C:cytosol"/>
    <property type="evidence" value="ECO:0007005"/>
    <property type="project" value="TAIR"/>
</dbReference>
<dbReference type="GO" id="GO:0005524">
    <property type="term" value="F:ATP binding"/>
    <property type="evidence" value="ECO:0007669"/>
    <property type="project" value="UniProtKB-KW"/>
</dbReference>
<dbReference type="GO" id="GO:0016301">
    <property type="term" value="F:kinase activity"/>
    <property type="evidence" value="ECO:0007669"/>
    <property type="project" value="UniProtKB-KW"/>
</dbReference>
<dbReference type="GO" id="GO:0000287">
    <property type="term" value="F:magnesium ion binding"/>
    <property type="evidence" value="ECO:0007669"/>
    <property type="project" value="InterPro"/>
</dbReference>
<dbReference type="GO" id="GO:0030955">
    <property type="term" value="F:potassium ion binding"/>
    <property type="evidence" value="ECO:0007669"/>
    <property type="project" value="InterPro"/>
</dbReference>
<dbReference type="GO" id="GO:0004743">
    <property type="term" value="F:pyruvate kinase activity"/>
    <property type="evidence" value="ECO:0007669"/>
    <property type="project" value="UniProtKB-EC"/>
</dbReference>
<dbReference type="CDD" id="cd00288">
    <property type="entry name" value="Pyruvate_Kinase"/>
    <property type="match status" value="1"/>
</dbReference>
<dbReference type="FunFam" id="2.40.33.10:FF:000001">
    <property type="entry name" value="Pyruvate kinase"/>
    <property type="match status" value="1"/>
</dbReference>
<dbReference type="FunFam" id="3.20.20.60:FF:000001">
    <property type="entry name" value="Pyruvate kinase"/>
    <property type="match status" value="1"/>
</dbReference>
<dbReference type="FunFam" id="3.40.1380.20:FF:000005">
    <property type="entry name" value="Pyruvate kinase"/>
    <property type="match status" value="1"/>
</dbReference>
<dbReference type="Gene3D" id="3.20.20.60">
    <property type="entry name" value="Phosphoenolpyruvate-binding domains"/>
    <property type="match status" value="1"/>
</dbReference>
<dbReference type="Gene3D" id="2.40.33.10">
    <property type="entry name" value="PK beta-barrel domain-like"/>
    <property type="match status" value="1"/>
</dbReference>
<dbReference type="Gene3D" id="3.40.1380.20">
    <property type="entry name" value="Pyruvate kinase, C-terminal domain"/>
    <property type="match status" value="1"/>
</dbReference>
<dbReference type="InterPro" id="IPR001697">
    <property type="entry name" value="Pyr_Knase"/>
</dbReference>
<dbReference type="InterPro" id="IPR015813">
    <property type="entry name" value="Pyrv/PenolPyrv_kinase-like_dom"/>
</dbReference>
<dbReference type="InterPro" id="IPR040442">
    <property type="entry name" value="Pyrv_kinase-like_dom_sf"/>
</dbReference>
<dbReference type="InterPro" id="IPR011037">
    <property type="entry name" value="Pyrv_Knase-like_insert_dom_sf"/>
</dbReference>
<dbReference type="InterPro" id="IPR018209">
    <property type="entry name" value="Pyrv_Knase_AS"/>
</dbReference>
<dbReference type="InterPro" id="IPR015793">
    <property type="entry name" value="Pyrv_Knase_brl"/>
</dbReference>
<dbReference type="InterPro" id="IPR015795">
    <property type="entry name" value="Pyrv_Knase_C"/>
</dbReference>
<dbReference type="InterPro" id="IPR036918">
    <property type="entry name" value="Pyrv_Knase_C_sf"/>
</dbReference>
<dbReference type="InterPro" id="IPR015806">
    <property type="entry name" value="Pyrv_Knase_insert_dom_sf"/>
</dbReference>
<dbReference type="NCBIfam" id="NF004491">
    <property type="entry name" value="PRK05826.1"/>
    <property type="match status" value="1"/>
</dbReference>
<dbReference type="NCBIfam" id="NF004978">
    <property type="entry name" value="PRK06354.1"/>
    <property type="match status" value="1"/>
</dbReference>
<dbReference type="NCBIfam" id="TIGR01064">
    <property type="entry name" value="pyruv_kin"/>
    <property type="match status" value="1"/>
</dbReference>
<dbReference type="PANTHER" id="PTHR11817">
    <property type="entry name" value="PYRUVATE KINASE"/>
    <property type="match status" value="1"/>
</dbReference>
<dbReference type="Pfam" id="PF00224">
    <property type="entry name" value="PK"/>
    <property type="match status" value="1"/>
</dbReference>
<dbReference type="Pfam" id="PF02887">
    <property type="entry name" value="PK_C"/>
    <property type="match status" value="1"/>
</dbReference>
<dbReference type="PRINTS" id="PR01050">
    <property type="entry name" value="PYRUVTKNASE"/>
</dbReference>
<dbReference type="SUPFAM" id="SSF51621">
    <property type="entry name" value="Phosphoenolpyruvate/pyruvate domain"/>
    <property type="match status" value="1"/>
</dbReference>
<dbReference type="SUPFAM" id="SSF50800">
    <property type="entry name" value="PK beta-barrel domain-like"/>
    <property type="match status" value="1"/>
</dbReference>
<dbReference type="SUPFAM" id="SSF52935">
    <property type="entry name" value="PK C-terminal domain-like"/>
    <property type="match status" value="1"/>
</dbReference>
<dbReference type="PROSITE" id="PS00110">
    <property type="entry name" value="PYRUVATE_KINASE"/>
    <property type="match status" value="1"/>
</dbReference>
<evidence type="ECO:0000250" key="1">
    <source>
        <dbReference type="UniProtKB" id="P00549"/>
    </source>
</evidence>
<evidence type="ECO:0000250" key="2">
    <source>
        <dbReference type="UniProtKB" id="P14618"/>
    </source>
</evidence>
<evidence type="ECO:0000250" key="3">
    <source>
        <dbReference type="UniProtKB" id="P30613"/>
    </source>
</evidence>
<evidence type="ECO:0000250" key="4">
    <source>
        <dbReference type="UniProtKB" id="Q2RAK2"/>
    </source>
</evidence>
<evidence type="ECO:0000250" key="5">
    <source>
        <dbReference type="UniProtKB" id="Q9LIK0"/>
    </source>
</evidence>
<evidence type="ECO:0000305" key="6"/>
<comment type="function">
    <text evidence="4">Key regulatory enzyme of the glycolytic pathway that catalyzes the final step of glycolysis, converting ADP and phosphoenolpyruvate (PEP) to ATP and pyruvate by essentially irreversible transphosphorylation.</text>
</comment>
<comment type="catalytic activity">
    <reaction>
        <text>pyruvate + ATP = phosphoenolpyruvate + ADP + H(+)</text>
        <dbReference type="Rhea" id="RHEA:18157"/>
        <dbReference type="ChEBI" id="CHEBI:15361"/>
        <dbReference type="ChEBI" id="CHEBI:15378"/>
        <dbReference type="ChEBI" id="CHEBI:30616"/>
        <dbReference type="ChEBI" id="CHEBI:58702"/>
        <dbReference type="ChEBI" id="CHEBI:456216"/>
        <dbReference type="EC" id="2.7.1.40"/>
    </reaction>
</comment>
<comment type="cofactor">
    <cofactor evidence="5">
        <name>Mg(2+)</name>
        <dbReference type="ChEBI" id="CHEBI:18420"/>
    </cofactor>
</comment>
<comment type="cofactor">
    <cofactor evidence="5">
        <name>K(+)</name>
        <dbReference type="ChEBI" id="CHEBI:29103"/>
    </cofactor>
</comment>
<comment type="pathway">
    <text>Carbohydrate degradation; glycolysis; pyruvate from D-glyceraldehyde 3-phosphate: step 5/5.</text>
</comment>
<comment type="subunit">
    <text evidence="3">Homotetramer.</text>
</comment>
<comment type="subcellular location">
    <subcellularLocation>
        <location evidence="4">Cytoplasm</location>
        <location evidence="4">Cytosol</location>
    </subcellularLocation>
</comment>
<comment type="similarity">
    <text evidence="6">Belongs to the pyruvate kinase family.</text>
</comment>
<protein>
    <recommendedName>
        <fullName>Probable pyruvate kinase, cytosolic isozyme</fullName>
        <shortName>PK</shortName>
        <ecNumber>2.7.1.40</ecNumber>
    </recommendedName>
</protein>